<dbReference type="EC" id="1.3.7.7" evidence="1"/>
<dbReference type="EMBL" id="U38804">
    <property type="protein sequence ID" value="AAC08073.1"/>
    <property type="molecule type" value="Genomic_DNA"/>
</dbReference>
<dbReference type="PIR" id="S73108">
    <property type="entry name" value="S73108"/>
</dbReference>
<dbReference type="RefSeq" id="NP_053797.1">
    <property type="nucleotide sequence ID" value="NC_000925.1"/>
</dbReference>
<dbReference type="SMR" id="P51187"/>
<dbReference type="GeneID" id="809810"/>
<dbReference type="UniPathway" id="UPA00670"/>
<dbReference type="GO" id="GO:0009507">
    <property type="term" value="C:chloroplast"/>
    <property type="evidence" value="ECO:0007669"/>
    <property type="project" value="UniProtKB-SubCell"/>
</dbReference>
<dbReference type="GO" id="GO:0051539">
    <property type="term" value="F:4 iron, 4 sulfur cluster binding"/>
    <property type="evidence" value="ECO:0007669"/>
    <property type="project" value="UniProtKB-UniRule"/>
</dbReference>
<dbReference type="GO" id="GO:0005524">
    <property type="term" value="F:ATP binding"/>
    <property type="evidence" value="ECO:0007669"/>
    <property type="project" value="UniProtKB-UniRule"/>
</dbReference>
<dbReference type="GO" id="GO:0046872">
    <property type="term" value="F:metal ion binding"/>
    <property type="evidence" value="ECO:0007669"/>
    <property type="project" value="UniProtKB-KW"/>
</dbReference>
<dbReference type="GO" id="GO:0016730">
    <property type="term" value="F:oxidoreductase activity, acting on iron-sulfur proteins as donors"/>
    <property type="evidence" value="ECO:0007669"/>
    <property type="project" value="InterPro"/>
</dbReference>
<dbReference type="GO" id="GO:0016636">
    <property type="term" value="F:oxidoreductase activity, acting on the CH-CH group of donors, iron-sulfur protein as acceptor"/>
    <property type="evidence" value="ECO:0007669"/>
    <property type="project" value="UniProtKB-UniRule"/>
</dbReference>
<dbReference type="GO" id="GO:0036068">
    <property type="term" value="P:light-independent chlorophyll biosynthetic process"/>
    <property type="evidence" value="ECO:0007669"/>
    <property type="project" value="UniProtKB-UniRule"/>
</dbReference>
<dbReference type="GO" id="GO:0019685">
    <property type="term" value="P:photosynthesis, dark reaction"/>
    <property type="evidence" value="ECO:0007669"/>
    <property type="project" value="InterPro"/>
</dbReference>
<dbReference type="CDD" id="cd02032">
    <property type="entry name" value="Bchl-like"/>
    <property type="match status" value="1"/>
</dbReference>
<dbReference type="Gene3D" id="3.40.50.300">
    <property type="entry name" value="P-loop containing nucleotide triphosphate hydrolases"/>
    <property type="match status" value="1"/>
</dbReference>
<dbReference type="HAMAP" id="MF_00355">
    <property type="entry name" value="ChlL_BchL"/>
    <property type="match status" value="1"/>
</dbReference>
<dbReference type="InterPro" id="IPR030655">
    <property type="entry name" value="NifH/chlL_CS"/>
</dbReference>
<dbReference type="InterPro" id="IPR000392">
    <property type="entry name" value="NifH/frxC"/>
</dbReference>
<dbReference type="InterPro" id="IPR027417">
    <property type="entry name" value="P-loop_NTPase"/>
</dbReference>
<dbReference type="InterPro" id="IPR005971">
    <property type="entry name" value="Protochlorophyllide_ATP-bd"/>
</dbReference>
<dbReference type="NCBIfam" id="TIGR01281">
    <property type="entry name" value="DPOR_bchL"/>
    <property type="match status" value="1"/>
</dbReference>
<dbReference type="PANTHER" id="PTHR42864">
    <property type="entry name" value="LIGHT-INDEPENDENT PROTOCHLOROPHYLLIDE REDUCTASE IRON-SULFUR ATP-BINDING PROTEIN"/>
    <property type="match status" value="1"/>
</dbReference>
<dbReference type="PANTHER" id="PTHR42864:SF2">
    <property type="entry name" value="LIGHT-INDEPENDENT PROTOCHLOROPHYLLIDE REDUCTASE IRON-SULFUR ATP-BINDING PROTEIN"/>
    <property type="match status" value="1"/>
</dbReference>
<dbReference type="Pfam" id="PF00142">
    <property type="entry name" value="Fer4_NifH"/>
    <property type="match status" value="1"/>
</dbReference>
<dbReference type="PIRSF" id="PIRSF000363">
    <property type="entry name" value="Nitrogenase_iron"/>
    <property type="match status" value="1"/>
</dbReference>
<dbReference type="PRINTS" id="PR00091">
    <property type="entry name" value="NITROGNASEII"/>
</dbReference>
<dbReference type="SUPFAM" id="SSF52540">
    <property type="entry name" value="P-loop containing nucleoside triphosphate hydrolases"/>
    <property type="match status" value="1"/>
</dbReference>
<dbReference type="PROSITE" id="PS00746">
    <property type="entry name" value="NIFH_FRXC_1"/>
    <property type="match status" value="1"/>
</dbReference>
<dbReference type="PROSITE" id="PS00692">
    <property type="entry name" value="NIFH_FRXC_2"/>
    <property type="match status" value="1"/>
</dbReference>
<dbReference type="PROSITE" id="PS51026">
    <property type="entry name" value="NIFH_FRXC_3"/>
    <property type="match status" value="1"/>
</dbReference>
<sequence length="290" mass="31690">MKLAVYGKGGIGKSTTSCNISVALSKRGKKVLQIGCDPKHDSTFTLTGFLIPTIIDTLQAKDYHYEDVWPEDVIYKGYGGVDCVEAGGPPAGAGCGGYVVGETVKLLKELNAFDEYDIILFDVLGDVVCGGFAAPLNYADYCLIITDNGFDALFAANRIAASVREKARTHSLRLAGLVGNRTDKRDLIDKYIDCVPMPVLEVLPLIEDIRVSRVKGKTLFEMAESDTNLAYVCDYYLNIADQLIARPEGVVPKEAADRELFSLLSDFYLNPKSNTTKSTADEEELDLMMV</sequence>
<geneLocation type="chloroplast"/>
<protein>
    <recommendedName>
        <fullName evidence="1">Light-independent protochlorophyllide reductase iron-sulfur ATP-binding protein</fullName>
        <shortName evidence="1">DPOR subunit L</shortName>
        <shortName evidence="1">LI-POR subunit L</shortName>
        <ecNumber evidence="1">1.3.7.7</ecNumber>
    </recommendedName>
</protein>
<name>CHLL_PORPU</name>
<keyword id="KW-0004">4Fe-4S</keyword>
<keyword id="KW-0067">ATP-binding</keyword>
<keyword id="KW-0149">Chlorophyll biosynthesis</keyword>
<keyword id="KW-0150">Chloroplast</keyword>
<keyword id="KW-0408">Iron</keyword>
<keyword id="KW-0411">Iron-sulfur</keyword>
<keyword id="KW-0460">Magnesium</keyword>
<keyword id="KW-0479">Metal-binding</keyword>
<keyword id="KW-0547">Nucleotide-binding</keyword>
<keyword id="KW-0560">Oxidoreductase</keyword>
<keyword id="KW-0602">Photosynthesis</keyword>
<keyword id="KW-0934">Plastid</keyword>
<organism>
    <name type="scientific">Porphyra purpurea</name>
    <name type="common">Red seaweed</name>
    <name type="synonym">Ulva purpurea</name>
    <dbReference type="NCBI Taxonomy" id="2787"/>
    <lineage>
        <taxon>Eukaryota</taxon>
        <taxon>Rhodophyta</taxon>
        <taxon>Bangiophyceae</taxon>
        <taxon>Bangiales</taxon>
        <taxon>Bangiaceae</taxon>
        <taxon>Porphyra</taxon>
    </lineage>
</organism>
<evidence type="ECO:0000255" key="1">
    <source>
        <dbReference type="HAMAP-Rule" id="MF_00355"/>
    </source>
</evidence>
<gene>
    <name evidence="1" type="primary">chlL</name>
</gene>
<feature type="chain" id="PRO_0000139568" description="Light-independent protochlorophyllide reductase iron-sulfur ATP-binding protein">
    <location>
        <begin position="1"/>
        <end position="290"/>
    </location>
</feature>
<feature type="binding site" evidence="1">
    <location>
        <begin position="10"/>
        <end position="15"/>
    </location>
    <ligand>
        <name>ATP</name>
        <dbReference type="ChEBI" id="CHEBI:30616"/>
    </ligand>
</feature>
<feature type="binding site" evidence="1">
    <location>
        <position position="14"/>
    </location>
    <ligand>
        <name>Mg(2+)</name>
        <dbReference type="ChEBI" id="CHEBI:18420"/>
    </ligand>
</feature>
<feature type="binding site" evidence="1">
    <location>
        <position position="39"/>
    </location>
    <ligand>
        <name>ATP</name>
        <dbReference type="ChEBI" id="CHEBI:30616"/>
    </ligand>
</feature>
<feature type="binding site" evidence="1">
    <location>
        <position position="95"/>
    </location>
    <ligand>
        <name>[4Fe-4S] cluster</name>
        <dbReference type="ChEBI" id="CHEBI:49883"/>
        <note>ligand shared between dimeric partners</note>
    </ligand>
</feature>
<feature type="binding site" evidence="1">
    <location>
        <position position="129"/>
    </location>
    <ligand>
        <name>[4Fe-4S] cluster</name>
        <dbReference type="ChEBI" id="CHEBI:49883"/>
        <note>ligand shared between dimeric partners</note>
    </ligand>
</feature>
<feature type="binding site" evidence="1">
    <location>
        <begin position="180"/>
        <end position="181"/>
    </location>
    <ligand>
        <name>ATP</name>
        <dbReference type="ChEBI" id="CHEBI:30616"/>
    </ligand>
</feature>
<accession>P51187</accession>
<proteinExistence type="inferred from homology"/>
<reference key="1">
    <citation type="journal article" date="1995" name="Plant Mol. Biol. Rep.">
        <title>Complete nucleotide sequence of the Porphyra purpurea chloroplast genome.</title>
        <authorList>
            <person name="Reith M.E."/>
            <person name="Munholland J."/>
        </authorList>
    </citation>
    <scope>NUCLEOTIDE SEQUENCE [LARGE SCALE GENOMIC DNA]</scope>
    <source>
        <strain>Avonport</strain>
    </source>
</reference>
<comment type="function">
    <text evidence="1">Component of the dark-operative protochlorophyllide reductase (DPOR) that uses Mg-ATP and reduced ferredoxin to reduce ring D of protochlorophyllide (Pchlide) to form chlorophyllide a (Chlide). This reaction is light-independent. The L component serves as a unique electron donor to the NB-component of the complex, and binds Mg-ATP.</text>
</comment>
<comment type="catalytic activity">
    <reaction evidence="1">
        <text>chlorophyllide a + oxidized 2[4Fe-4S]-[ferredoxin] + 2 ADP + 2 phosphate = protochlorophyllide a + reduced 2[4Fe-4S]-[ferredoxin] + 2 ATP + 2 H2O</text>
        <dbReference type="Rhea" id="RHEA:28202"/>
        <dbReference type="Rhea" id="RHEA-COMP:10002"/>
        <dbReference type="Rhea" id="RHEA-COMP:10004"/>
        <dbReference type="ChEBI" id="CHEBI:15377"/>
        <dbReference type="ChEBI" id="CHEBI:30616"/>
        <dbReference type="ChEBI" id="CHEBI:33722"/>
        <dbReference type="ChEBI" id="CHEBI:33723"/>
        <dbReference type="ChEBI" id="CHEBI:43474"/>
        <dbReference type="ChEBI" id="CHEBI:83348"/>
        <dbReference type="ChEBI" id="CHEBI:83350"/>
        <dbReference type="ChEBI" id="CHEBI:456216"/>
        <dbReference type="EC" id="1.3.7.7"/>
    </reaction>
</comment>
<comment type="cofactor">
    <cofactor evidence="1">
        <name>[4Fe-4S] cluster</name>
        <dbReference type="ChEBI" id="CHEBI:49883"/>
    </cofactor>
    <text evidence="1">Binds 1 [4Fe-4S] cluster per dimer.</text>
</comment>
<comment type="pathway">
    <text evidence="1">Porphyrin-containing compound metabolism; chlorophyll biosynthesis (light-independent).</text>
</comment>
<comment type="subunit">
    <text evidence="1">Homodimer. Protochlorophyllide reductase is composed of three subunits; ChlL, ChlN and ChlB.</text>
</comment>
<comment type="subcellular location">
    <subcellularLocation>
        <location>Plastid</location>
        <location>Chloroplast</location>
    </subcellularLocation>
</comment>
<comment type="similarity">
    <text evidence="1">Belongs to the NifH/BchL/ChlL family.</text>
</comment>